<feature type="chain" id="PRO_0000274278" description="Cilia- and flagella-associated protein 300">
    <location>
        <begin position="1"/>
        <end position="267"/>
    </location>
</feature>
<proteinExistence type="evidence at transcript level"/>
<protein>
    <recommendedName>
        <fullName evidence="3">Cilia- and flagella-associated protein 300</fullName>
    </recommendedName>
</protein>
<reference key="1">
    <citation type="submission" date="2004-12" db="EMBL/GenBank/DDBJ databases">
        <authorList>
            <consortium name="NIH - Xenopus Gene Collection (XGC) project"/>
        </authorList>
    </citation>
    <scope>NUCLEOTIDE SEQUENCE [LARGE SCALE MRNA]</scope>
</reference>
<keyword id="KW-0966">Cell projection</keyword>
<keyword id="KW-0963">Cytoplasm</keyword>
<keyword id="KW-0206">Cytoskeleton</keyword>
<keyword id="KW-1185">Reference proteome</keyword>
<organism>
    <name type="scientific">Xenopus tropicalis</name>
    <name type="common">Western clawed frog</name>
    <name type="synonym">Silurana tropicalis</name>
    <dbReference type="NCBI Taxonomy" id="8364"/>
    <lineage>
        <taxon>Eukaryota</taxon>
        <taxon>Metazoa</taxon>
        <taxon>Chordata</taxon>
        <taxon>Craniata</taxon>
        <taxon>Vertebrata</taxon>
        <taxon>Euteleostomi</taxon>
        <taxon>Amphibia</taxon>
        <taxon>Batrachia</taxon>
        <taxon>Anura</taxon>
        <taxon>Pipoidea</taxon>
        <taxon>Pipidae</taxon>
        <taxon>Xenopodinae</taxon>
        <taxon>Xenopus</taxon>
        <taxon>Silurana</taxon>
    </lineage>
</organism>
<accession>Q5I0R4</accession>
<gene>
    <name evidence="2" type="primary">cfap300</name>
</gene>
<comment type="function">
    <text evidence="1">Cilium- and flagellum-specific protein that plays a role in axonemal structure organization and motility. May play a role in outer and inner dynein arm assembly.</text>
</comment>
<comment type="subcellular location">
    <subcellularLocation>
        <location evidence="1">Cytoplasm</location>
    </subcellularLocation>
    <subcellularLocation>
        <location evidence="1">Cytoplasm</location>
        <location evidence="1">Cytoskeleton</location>
        <location evidence="1">Cilium axoneme</location>
    </subcellularLocation>
</comment>
<comment type="similarity">
    <text evidence="3">Belongs to the CFAP300 family.</text>
</comment>
<name>CF300_XENTR</name>
<dbReference type="EMBL" id="BC088061">
    <property type="protein sequence ID" value="AAH88061.1"/>
    <property type="molecule type" value="mRNA"/>
</dbReference>
<dbReference type="RefSeq" id="NP_001011429.1">
    <property type="nucleotide sequence ID" value="NM_001011429.1"/>
</dbReference>
<dbReference type="FunCoup" id="Q5I0R4">
    <property type="interactions" value="64"/>
</dbReference>
<dbReference type="STRING" id="8364.ENSXETP00000037777"/>
<dbReference type="PaxDb" id="8364-ENSXETP00000047995"/>
<dbReference type="DNASU" id="496912"/>
<dbReference type="GeneID" id="496912"/>
<dbReference type="KEGG" id="xtr:496912"/>
<dbReference type="AGR" id="Xenbase:XB-GENE-943457"/>
<dbReference type="CTD" id="85016"/>
<dbReference type="Xenbase" id="XB-GENE-943457">
    <property type="gene designation" value="cfap300"/>
</dbReference>
<dbReference type="eggNOG" id="ENOG502QUFH">
    <property type="taxonomic scope" value="Eukaryota"/>
</dbReference>
<dbReference type="InParanoid" id="Q5I0R4"/>
<dbReference type="OMA" id="FYHCYGV"/>
<dbReference type="OrthoDB" id="10259249at2759"/>
<dbReference type="Proteomes" id="UP000008143">
    <property type="component" value="Chromosome 2"/>
</dbReference>
<dbReference type="Bgee" id="ENSXETG00000022178">
    <property type="expression patterns" value="Expressed in testis and 9 other cell types or tissues"/>
</dbReference>
<dbReference type="GO" id="GO:0005737">
    <property type="term" value="C:cytoplasm"/>
    <property type="evidence" value="ECO:0000250"/>
    <property type="project" value="UniProtKB"/>
</dbReference>
<dbReference type="GO" id="GO:0005856">
    <property type="term" value="C:cytoskeleton"/>
    <property type="evidence" value="ECO:0007669"/>
    <property type="project" value="UniProtKB-KW"/>
</dbReference>
<dbReference type="GO" id="GO:0031514">
    <property type="term" value="C:motile cilium"/>
    <property type="evidence" value="ECO:0000250"/>
    <property type="project" value="UniProtKB"/>
</dbReference>
<dbReference type="InterPro" id="IPR029416">
    <property type="entry name" value="CFAP300"/>
</dbReference>
<dbReference type="PANTHER" id="PTHR31078">
    <property type="entry name" value="CILIA- AND FLAGELLA-ASSOCIATED PROTEIN 300"/>
    <property type="match status" value="1"/>
</dbReference>
<dbReference type="PANTHER" id="PTHR31078:SF1">
    <property type="entry name" value="CILIA- AND FLAGELLA-ASSOCIATED PROTEIN 300"/>
    <property type="match status" value="1"/>
</dbReference>
<dbReference type="Pfam" id="PF14926">
    <property type="entry name" value="CFAP300"/>
    <property type="match status" value="1"/>
</dbReference>
<evidence type="ECO:0000250" key="1">
    <source>
        <dbReference type="UniProtKB" id="A0CY51"/>
    </source>
</evidence>
<evidence type="ECO:0000250" key="2">
    <source>
        <dbReference type="UniProtKB" id="Q9BRQ4"/>
    </source>
</evidence>
<evidence type="ECO:0000305" key="3"/>
<sequence length="267" mass="30709">MSAGSFSTEAAKFSFSPILNKTFGFLTNRDTRELLMKWSMNGRITAQAFRYDECFQPYQKNDFVWAFFQDPDVLSHLKIVSENSGQWVTLGTKVKKVDVQEILCSQLSMSLFDCLYSEGIVRESGHICKCLDEYLDDFTISDELRKVLLLDDCEKHDVFSQSDREQFLFLLFKHLCLGGAICQFEDTIGPYLETTKSIYKDLLSVQKDPETKQIRIISTVFKVSAYDENGMCYPSGRPHQQTFAYLIVDPLKRHVYVLYHCFGGGAF</sequence>